<dbReference type="EC" id="1.-.-.-" evidence="5"/>
<dbReference type="EMBL" id="LC314149">
    <property type="protein sequence ID" value="BCI98773.1"/>
    <property type="molecule type" value="Genomic_DNA"/>
</dbReference>
<dbReference type="SMR" id="A0A6S6QPY4"/>
<dbReference type="GlyCosmos" id="A0A6S6QPY4">
    <property type="glycosylation" value="6 sites, No reported glycans"/>
</dbReference>
<dbReference type="UniPathway" id="UPA00213"/>
<dbReference type="GO" id="GO:0016020">
    <property type="term" value="C:membrane"/>
    <property type="evidence" value="ECO:0007669"/>
    <property type="project" value="UniProtKB-SubCell"/>
</dbReference>
<dbReference type="GO" id="GO:0020037">
    <property type="term" value="F:heme binding"/>
    <property type="evidence" value="ECO:0007669"/>
    <property type="project" value="InterPro"/>
</dbReference>
<dbReference type="GO" id="GO:0005506">
    <property type="term" value="F:iron ion binding"/>
    <property type="evidence" value="ECO:0007669"/>
    <property type="project" value="InterPro"/>
</dbReference>
<dbReference type="GO" id="GO:0004497">
    <property type="term" value="F:monooxygenase activity"/>
    <property type="evidence" value="ECO:0007669"/>
    <property type="project" value="UniProtKB-KW"/>
</dbReference>
<dbReference type="GO" id="GO:0016705">
    <property type="term" value="F:oxidoreductase activity, acting on paired donors, with incorporation or reduction of molecular oxygen"/>
    <property type="evidence" value="ECO:0007669"/>
    <property type="project" value="InterPro"/>
</dbReference>
<dbReference type="GO" id="GO:0016114">
    <property type="term" value="P:terpenoid biosynthetic process"/>
    <property type="evidence" value="ECO:0007669"/>
    <property type="project" value="UniProtKB-UniPathway"/>
</dbReference>
<dbReference type="CDD" id="cd11065">
    <property type="entry name" value="CYP64-like"/>
    <property type="match status" value="1"/>
</dbReference>
<dbReference type="Gene3D" id="1.10.630.10">
    <property type="entry name" value="Cytochrome P450"/>
    <property type="match status" value="1"/>
</dbReference>
<dbReference type="InterPro" id="IPR001128">
    <property type="entry name" value="Cyt_P450"/>
</dbReference>
<dbReference type="InterPro" id="IPR017972">
    <property type="entry name" value="Cyt_P450_CS"/>
</dbReference>
<dbReference type="InterPro" id="IPR002401">
    <property type="entry name" value="Cyt_P450_E_grp-I"/>
</dbReference>
<dbReference type="InterPro" id="IPR036396">
    <property type="entry name" value="Cyt_P450_sf"/>
</dbReference>
<dbReference type="InterPro" id="IPR050364">
    <property type="entry name" value="Cytochrome_P450_fung"/>
</dbReference>
<dbReference type="PANTHER" id="PTHR46300:SF2">
    <property type="entry name" value="CYTOCHROME P450 MONOOXYGENASE ALNH-RELATED"/>
    <property type="match status" value="1"/>
</dbReference>
<dbReference type="PANTHER" id="PTHR46300">
    <property type="entry name" value="P450, PUTATIVE (EUROFUNG)-RELATED-RELATED"/>
    <property type="match status" value="1"/>
</dbReference>
<dbReference type="Pfam" id="PF00067">
    <property type="entry name" value="p450"/>
    <property type="match status" value="1"/>
</dbReference>
<dbReference type="PRINTS" id="PR00463">
    <property type="entry name" value="EP450I"/>
</dbReference>
<dbReference type="PRINTS" id="PR00385">
    <property type="entry name" value="P450"/>
</dbReference>
<dbReference type="SUPFAM" id="SSF48264">
    <property type="entry name" value="Cytochrome P450"/>
    <property type="match status" value="1"/>
</dbReference>
<dbReference type="PROSITE" id="PS00086">
    <property type="entry name" value="CYTOCHROME_P450"/>
    <property type="match status" value="1"/>
</dbReference>
<feature type="chain" id="PRO_0000453726" description="Cytochrome P450 monooxygenase ple5B">
    <location>
        <begin position="1"/>
        <end position="523"/>
    </location>
</feature>
<feature type="transmembrane region" description="Helical" evidence="3">
    <location>
        <begin position="16"/>
        <end position="33"/>
    </location>
</feature>
<feature type="binding site" description="axial binding residue" evidence="2">
    <location>
        <position position="446"/>
    </location>
    <ligand>
        <name>heme</name>
        <dbReference type="ChEBI" id="CHEBI:30413"/>
    </ligand>
    <ligandPart>
        <name>Fe</name>
        <dbReference type="ChEBI" id="CHEBI:18248"/>
    </ligandPart>
</feature>
<feature type="glycosylation site" description="N-linked (GlcNAc...) asparagine" evidence="4">
    <location>
        <position position="82"/>
    </location>
</feature>
<feature type="glycosylation site" description="N-linked (GlcNAc...) asparagine" evidence="4">
    <location>
        <position position="103"/>
    </location>
</feature>
<feature type="glycosylation site" description="N-linked (GlcNAc...) asparagine" evidence="4">
    <location>
        <position position="122"/>
    </location>
</feature>
<feature type="glycosylation site" description="N-linked (GlcNAc...) asparagine" evidence="4">
    <location>
        <position position="295"/>
    </location>
</feature>
<feature type="glycosylation site" description="N-linked (GlcNAc...) asparagine" evidence="4">
    <location>
        <position position="379"/>
    </location>
</feature>
<feature type="glycosylation site" description="N-linked (GlcNAc...) asparagine" evidence="4">
    <location>
        <position position="423"/>
    </location>
</feature>
<comment type="function">
    <text evidence="1 5">Cytochrome P450 monooxygenase; part of the gene cluster that mediates the biosynthesis of pleuromutilin, a tricyclic diterpene showing antibacterial properties (PubMed:28924980). The geranylgeranyl diphosphate (GGPP) synthase ple4 catalyzes the first step in pleuromutilin biosynthesis (PubMed:28924980). GGPP is then substrate of the premutilin synthase (PS) ple3 to yield premutilin (PubMed:28924980). Premutilin synthase is a bifunctional enzyme composed of the fusion of a class II diterpene cyclase (DTC) and a class I diterpene synthase (DTS), with the corresponding domains and active sites containing characteristic aspartate-rich motifs (By similarity). GGPP is first converted to mutildienyl-diphosphate (MPP) at the class II DTC site (By similarity). MPP is subsequently further cyclized at the class I DTS site, followed by a 1,5-hydride shift and addition of water prior to terminating deprotonation, to yield premutilin (By similarity). The cytochrome P450 monooxygenases ple5 and ple6 hydroxylate premutilin at C-11 and C-3, respectively, producing 11-hydroxypremutilin and 3-hydroxypremutilin (PubMed:28924980). The combination of the actions of both ple5 and ple6 leads to the production of 3,11-dihydroxypremutilin (PubMed:28924980). The short chain dehydrogenase ple7 further converts 3,11-dihydroxypremutilin into mutilin (PubMed:28924980). The acetyltransferase ple2 then acetylates mutilin to produce 14-O-acetylmutilin (PubMed:28924980). Finally, the cytochrome P450 monooxygenase ple1 catalyzes hydroxylation on the alpha position of the acetyl side chain of 14-O-acetylmutilin to yield pleuromutilin (PubMed:28924980).</text>
</comment>
<comment type="cofactor">
    <cofactor evidence="2">
        <name>heme</name>
        <dbReference type="ChEBI" id="CHEBI:30413"/>
    </cofactor>
</comment>
<comment type="pathway">
    <text evidence="5">Secondary metabolite biosynthesis; terpenoid biosynthesis.</text>
</comment>
<comment type="subcellular location">
    <subcellularLocation>
        <location evidence="3">Membrane</location>
        <topology evidence="3">Single-pass membrane protein</topology>
    </subcellularLocation>
</comment>
<comment type="similarity">
    <text evidence="7">Belongs to the cytochrome P450 family.</text>
</comment>
<organism>
    <name type="scientific">Rhodocybe pseudopiperita</name>
    <name type="common">Clitopilus pseudopiperitus</name>
    <dbReference type="NCBI Taxonomy" id="693819"/>
    <lineage>
        <taxon>Eukaryota</taxon>
        <taxon>Fungi</taxon>
        <taxon>Dikarya</taxon>
        <taxon>Basidiomycota</taxon>
        <taxon>Agaricomycotina</taxon>
        <taxon>Agaricomycetes</taxon>
        <taxon>Agaricomycetidae</taxon>
        <taxon>Agaricales</taxon>
        <taxon>Tricholomatineae</taxon>
        <taxon>Entolomataceae</taxon>
        <taxon>Rhodocybe</taxon>
    </lineage>
</organism>
<sequence length="523" mass="58303">MLSVDLPSVANLDPRIAAAAAGSAVAVYKLLQLGSRESFLPPGPPTRPVLGNAHLMTKMWLPMQLTEWAREYGEVYSLKLMNRTVIVLNSPKAVRTILDKQGNITGDRPFSPMISRYTEGLNLTVESMDTSVWKTGRKGIHNYLTPSALSGYVPRQEEESVNLMHDLLMDAPNRPIHIRRAMMSLLLHIVYGQPRCESYYGTVIENAYEAATRIGQIAHNGAAVDAFPFLDYIPRGFPGAGWKTIVDEFKDFRNSVYNSLLDGAKKAMDSGIRTGCFAESVIDHPDGRSWLELSNLSGGFLDAGAKTTISYIESCILALIAHPDCQRKIQDELDHVLGTETMPCFDDLERLPYLKAFLQEVLRLRPVGPVALPHVSRENLSYGGHVLPEGSMIFMNIWGMGHDPELFDEPEAFKPERYLLTSNGTKPGLSEDVNPDFLFGAGRRVCPGDKLAKRSTGLFIMRLCWAFNFYPDSSNKDTVKNMNMEDCYDKSVSLETLPLPFACKIEPRDKMKEDLIKEAFAAL</sequence>
<evidence type="ECO:0000250" key="1">
    <source>
        <dbReference type="UniProtKB" id="A0A2L0VXR0"/>
    </source>
</evidence>
<evidence type="ECO:0000250" key="2">
    <source>
        <dbReference type="UniProtKB" id="P04798"/>
    </source>
</evidence>
<evidence type="ECO:0000255" key="3"/>
<evidence type="ECO:0000255" key="4">
    <source>
        <dbReference type="PROSITE-ProRule" id="PRU00498"/>
    </source>
</evidence>
<evidence type="ECO:0000269" key="5">
    <source>
    </source>
</evidence>
<evidence type="ECO:0000303" key="6">
    <source>
    </source>
</evidence>
<evidence type="ECO:0000305" key="7"/>
<proteinExistence type="evidence at protein level"/>
<gene>
    <name evidence="6" type="primary">ple5</name>
</gene>
<name>PLE5_RHOPP</name>
<keyword id="KW-0325">Glycoprotein</keyword>
<keyword id="KW-0349">Heme</keyword>
<keyword id="KW-0408">Iron</keyword>
<keyword id="KW-0472">Membrane</keyword>
<keyword id="KW-0479">Metal-binding</keyword>
<keyword id="KW-0503">Monooxygenase</keyword>
<keyword id="KW-0560">Oxidoreductase</keyword>
<keyword id="KW-0812">Transmembrane</keyword>
<keyword id="KW-1133">Transmembrane helix</keyword>
<accession>A0A6S6QPY4</accession>
<protein>
    <recommendedName>
        <fullName evidence="6">Cytochrome P450 monooxygenase ple5B</fullName>
        <ecNumber evidence="5">1.-.-.-</ecNumber>
    </recommendedName>
    <alternativeName>
        <fullName evidence="6">Pleuromutilin biosynthesis cluster protein 5</fullName>
    </alternativeName>
</protein>
<reference key="1">
    <citation type="journal article" date="2017" name="ChemBioChem">
        <title>Biosynthetic machinery of diterpene pleuromutilin isolated from basidiomycete fungi.</title>
        <authorList>
            <person name="Yamane M."/>
            <person name="Minami A."/>
            <person name="Liu C."/>
            <person name="Ozaki T."/>
            <person name="Takeuchi I."/>
            <person name="Tsukagoshi T."/>
            <person name="Tokiwano T."/>
            <person name="Gomi K."/>
            <person name="Oikawa H."/>
        </authorList>
    </citation>
    <scope>NUCLEOTIDE SEQUENCE [GENOMIC DNA]</scope>
    <scope>FUNCTION</scope>
    <scope>CATALYTIC ACTIVITY</scope>
    <scope>PATHWAY</scope>
    <source>
        <strain>ATCC 20527</strain>
    </source>
</reference>